<evidence type="ECO:0000255" key="1">
    <source>
        <dbReference type="HAMAP-Rule" id="MF_00120"/>
    </source>
</evidence>
<organism>
    <name type="scientific">Pelagibacter ubique (strain HTCC1062)</name>
    <dbReference type="NCBI Taxonomy" id="335992"/>
    <lineage>
        <taxon>Bacteria</taxon>
        <taxon>Pseudomonadati</taxon>
        <taxon>Pseudomonadota</taxon>
        <taxon>Alphaproteobacteria</taxon>
        <taxon>Candidatus Pelagibacterales</taxon>
        <taxon>Candidatus Pelagibacteraceae</taxon>
        <taxon>Candidatus Pelagibacter</taxon>
    </lineage>
</organism>
<comment type="function">
    <text evidence="1">Allows the formation of correctly charged Gln-tRNA(Gln) through the transamidation of misacylated Glu-tRNA(Gln) in organisms which lack glutaminyl-tRNA synthetase. The reaction takes place in the presence of glutamine and ATP through an activated gamma-phospho-Glu-tRNA(Gln).</text>
</comment>
<comment type="catalytic activity">
    <reaction evidence="1">
        <text>L-glutamyl-tRNA(Gln) + L-glutamine + ATP + H2O = L-glutaminyl-tRNA(Gln) + L-glutamate + ADP + phosphate + H(+)</text>
        <dbReference type="Rhea" id="RHEA:17521"/>
        <dbReference type="Rhea" id="RHEA-COMP:9681"/>
        <dbReference type="Rhea" id="RHEA-COMP:9684"/>
        <dbReference type="ChEBI" id="CHEBI:15377"/>
        <dbReference type="ChEBI" id="CHEBI:15378"/>
        <dbReference type="ChEBI" id="CHEBI:29985"/>
        <dbReference type="ChEBI" id="CHEBI:30616"/>
        <dbReference type="ChEBI" id="CHEBI:43474"/>
        <dbReference type="ChEBI" id="CHEBI:58359"/>
        <dbReference type="ChEBI" id="CHEBI:78520"/>
        <dbReference type="ChEBI" id="CHEBI:78521"/>
        <dbReference type="ChEBI" id="CHEBI:456216"/>
        <dbReference type="EC" id="6.3.5.7"/>
    </reaction>
</comment>
<comment type="subunit">
    <text evidence="1">Heterotrimer of A, B and C subunits.</text>
</comment>
<comment type="similarity">
    <text evidence="1">Belongs to the amidase family. GatA subfamily.</text>
</comment>
<gene>
    <name evidence="1" type="primary">gatA</name>
    <name type="ordered locus">SAR11_1077</name>
</gene>
<name>GATA_PELUB</name>
<proteinExistence type="inferred from homology"/>
<accession>Q4FLQ7</accession>
<dbReference type="EC" id="6.3.5.7" evidence="1"/>
<dbReference type="EMBL" id="CP000084">
    <property type="protein sequence ID" value="AAZ21881.1"/>
    <property type="molecule type" value="Genomic_DNA"/>
</dbReference>
<dbReference type="RefSeq" id="WP_011282145.1">
    <property type="nucleotide sequence ID" value="NC_007205.1"/>
</dbReference>
<dbReference type="SMR" id="Q4FLQ7"/>
<dbReference type="STRING" id="335992.SAR11_1077"/>
<dbReference type="GeneID" id="66295567"/>
<dbReference type="KEGG" id="pub:SAR11_1077"/>
<dbReference type="eggNOG" id="COG0154">
    <property type="taxonomic scope" value="Bacteria"/>
</dbReference>
<dbReference type="HOGENOM" id="CLU_009600_0_3_5"/>
<dbReference type="OrthoDB" id="9811471at2"/>
<dbReference type="Proteomes" id="UP000002528">
    <property type="component" value="Chromosome"/>
</dbReference>
<dbReference type="GO" id="GO:0030956">
    <property type="term" value="C:glutamyl-tRNA(Gln) amidotransferase complex"/>
    <property type="evidence" value="ECO:0007669"/>
    <property type="project" value="InterPro"/>
</dbReference>
<dbReference type="GO" id="GO:0005524">
    <property type="term" value="F:ATP binding"/>
    <property type="evidence" value="ECO:0007669"/>
    <property type="project" value="UniProtKB-KW"/>
</dbReference>
<dbReference type="GO" id="GO:0050567">
    <property type="term" value="F:glutaminyl-tRNA synthase (glutamine-hydrolyzing) activity"/>
    <property type="evidence" value="ECO:0007669"/>
    <property type="project" value="UniProtKB-UniRule"/>
</dbReference>
<dbReference type="GO" id="GO:0006412">
    <property type="term" value="P:translation"/>
    <property type="evidence" value="ECO:0007669"/>
    <property type="project" value="UniProtKB-UniRule"/>
</dbReference>
<dbReference type="Gene3D" id="3.90.1300.10">
    <property type="entry name" value="Amidase signature (AS) domain"/>
    <property type="match status" value="1"/>
</dbReference>
<dbReference type="HAMAP" id="MF_00120">
    <property type="entry name" value="GatA"/>
    <property type="match status" value="1"/>
</dbReference>
<dbReference type="InterPro" id="IPR000120">
    <property type="entry name" value="Amidase"/>
</dbReference>
<dbReference type="InterPro" id="IPR020556">
    <property type="entry name" value="Amidase_CS"/>
</dbReference>
<dbReference type="InterPro" id="IPR023631">
    <property type="entry name" value="Amidase_dom"/>
</dbReference>
<dbReference type="InterPro" id="IPR036928">
    <property type="entry name" value="AS_sf"/>
</dbReference>
<dbReference type="InterPro" id="IPR004412">
    <property type="entry name" value="GatA"/>
</dbReference>
<dbReference type="NCBIfam" id="TIGR00132">
    <property type="entry name" value="gatA"/>
    <property type="match status" value="1"/>
</dbReference>
<dbReference type="PANTHER" id="PTHR11895:SF151">
    <property type="entry name" value="GLUTAMYL-TRNA(GLN) AMIDOTRANSFERASE SUBUNIT A"/>
    <property type="match status" value="1"/>
</dbReference>
<dbReference type="PANTHER" id="PTHR11895">
    <property type="entry name" value="TRANSAMIDASE"/>
    <property type="match status" value="1"/>
</dbReference>
<dbReference type="Pfam" id="PF01425">
    <property type="entry name" value="Amidase"/>
    <property type="match status" value="1"/>
</dbReference>
<dbReference type="SUPFAM" id="SSF75304">
    <property type="entry name" value="Amidase signature (AS) enzymes"/>
    <property type="match status" value="1"/>
</dbReference>
<dbReference type="PROSITE" id="PS00571">
    <property type="entry name" value="AMIDASES"/>
    <property type="match status" value="1"/>
</dbReference>
<protein>
    <recommendedName>
        <fullName evidence="1">Glutamyl-tRNA(Gln) amidotransferase subunit A</fullName>
        <shortName evidence="1">Glu-ADT subunit A</shortName>
        <ecNumber evidence="1">6.3.5.7</ecNumber>
    </recommendedName>
</protein>
<feature type="chain" id="PRO_0000241130" description="Glutamyl-tRNA(Gln) amidotransferase subunit A">
    <location>
        <begin position="1"/>
        <end position="485"/>
    </location>
</feature>
<feature type="active site" description="Charge relay system" evidence="1">
    <location>
        <position position="76"/>
    </location>
</feature>
<feature type="active site" description="Charge relay system" evidence="1">
    <location>
        <position position="151"/>
    </location>
</feature>
<feature type="active site" description="Acyl-ester intermediate" evidence="1">
    <location>
        <position position="175"/>
    </location>
</feature>
<sequence length="485" mass="53304">MSDITSLTLTELVKNIKDKKISSEETTKAFIDRGEKSRDLNTYITEDFSNALLKAKSFDQKPNFDLKLPGVPIAVKDLFCTKDVKTTAGSKILNNFIPPYESTVTQNIWNEGAILLGKLNCDEFAMGSSNETSFFGNVQSPIDKGLVPGGSSGGSASALAANLTPITIGTDTGGSIRQPASFTGTVGLKPTYGSCSRYGIVAFASSLDQAGPMSKDVKDCALLQEIISTYDEKDSTSIDFKRNEYSKELTNNIKGKKIGIPKEYRVDGMPKEIEDLWTKGIEYAKDCGAEIVEISLPHTNYALPTYYIVAPAEASSNLARYDGVKYGFRSKGENLIDMYEKTRSEGFGSEVQRRIMIGTYVLSSGYYDAYYLKAQKVRKLIKNDFDEAYKKVDAILTPSTPSAAFKIGEKTNDPVSMYLNDIFTVPVNLAGLPAISIPAGIDVKGYPLGLQIIGKAFDEQNILNIAYAMEEKIQFKNKITDWWIK</sequence>
<reference key="1">
    <citation type="journal article" date="2005" name="Science">
        <title>Genome streamlining in a cosmopolitan oceanic bacterium.</title>
        <authorList>
            <person name="Giovannoni S.J."/>
            <person name="Tripp H.J."/>
            <person name="Givan S."/>
            <person name="Podar M."/>
            <person name="Vergin K.L."/>
            <person name="Baptista D."/>
            <person name="Bibbs L."/>
            <person name="Eads J."/>
            <person name="Richardson T.H."/>
            <person name="Noordewier M."/>
            <person name="Rappe M.S."/>
            <person name="Short J.M."/>
            <person name="Carrington J.C."/>
            <person name="Mathur E.J."/>
        </authorList>
    </citation>
    <scope>NUCLEOTIDE SEQUENCE [LARGE SCALE GENOMIC DNA]</scope>
    <source>
        <strain>HTCC1062</strain>
    </source>
</reference>
<keyword id="KW-0067">ATP-binding</keyword>
<keyword id="KW-0436">Ligase</keyword>
<keyword id="KW-0547">Nucleotide-binding</keyword>
<keyword id="KW-0648">Protein biosynthesis</keyword>
<keyword id="KW-1185">Reference proteome</keyword>